<accession>Q6GI19</accession>
<feature type="chain" id="PRO_0000075006" description="N5-carboxyaminoimidazole ribonucleotide synthase">
    <location>
        <begin position="1"/>
        <end position="374"/>
    </location>
</feature>
<feature type="domain" description="ATP-grasp" evidence="1">
    <location>
        <begin position="112"/>
        <end position="296"/>
    </location>
</feature>
<feature type="binding site" evidence="1">
    <location>
        <position position="108"/>
    </location>
    <ligand>
        <name>ATP</name>
        <dbReference type="ChEBI" id="CHEBI:30616"/>
    </ligand>
</feature>
<feature type="binding site" evidence="1">
    <location>
        <position position="148"/>
    </location>
    <ligand>
        <name>ATP</name>
        <dbReference type="ChEBI" id="CHEBI:30616"/>
    </ligand>
</feature>
<feature type="binding site" evidence="1">
    <location>
        <begin position="153"/>
        <end position="159"/>
    </location>
    <ligand>
        <name>ATP</name>
        <dbReference type="ChEBI" id="CHEBI:30616"/>
    </ligand>
</feature>
<feature type="binding site" evidence="1">
    <location>
        <begin position="183"/>
        <end position="186"/>
    </location>
    <ligand>
        <name>ATP</name>
        <dbReference type="ChEBI" id="CHEBI:30616"/>
    </ligand>
</feature>
<feature type="binding site" evidence="1">
    <location>
        <position position="191"/>
    </location>
    <ligand>
        <name>ATP</name>
        <dbReference type="ChEBI" id="CHEBI:30616"/>
    </ligand>
</feature>
<feature type="binding site" evidence="1">
    <location>
        <position position="214"/>
    </location>
    <ligand>
        <name>ATP</name>
        <dbReference type="ChEBI" id="CHEBI:30616"/>
    </ligand>
</feature>
<feature type="binding site" evidence="1">
    <location>
        <begin position="266"/>
        <end position="267"/>
    </location>
    <ligand>
        <name>ATP</name>
        <dbReference type="ChEBI" id="CHEBI:30616"/>
    </ligand>
</feature>
<dbReference type="EC" id="6.3.4.18" evidence="1"/>
<dbReference type="EMBL" id="BX571856">
    <property type="protein sequence ID" value="CAG40042.1"/>
    <property type="molecule type" value="Genomic_DNA"/>
</dbReference>
<dbReference type="RefSeq" id="WP_001010391.1">
    <property type="nucleotide sequence ID" value="NC_002952.2"/>
</dbReference>
<dbReference type="SMR" id="Q6GI19"/>
<dbReference type="KEGG" id="sar:SAR1039"/>
<dbReference type="HOGENOM" id="CLU_011534_0_1_9"/>
<dbReference type="UniPathway" id="UPA00074">
    <property type="reaction ID" value="UER00942"/>
</dbReference>
<dbReference type="Proteomes" id="UP000000596">
    <property type="component" value="Chromosome"/>
</dbReference>
<dbReference type="GO" id="GO:0005829">
    <property type="term" value="C:cytosol"/>
    <property type="evidence" value="ECO:0007669"/>
    <property type="project" value="TreeGrafter"/>
</dbReference>
<dbReference type="GO" id="GO:0034028">
    <property type="term" value="F:5-(carboxyamino)imidazole ribonucleotide synthase activity"/>
    <property type="evidence" value="ECO:0007669"/>
    <property type="project" value="UniProtKB-UniRule"/>
</dbReference>
<dbReference type="GO" id="GO:0005524">
    <property type="term" value="F:ATP binding"/>
    <property type="evidence" value="ECO:0007669"/>
    <property type="project" value="UniProtKB-KW"/>
</dbReference>
<dbReference type="GO" id="GO:0046872">
    <property type="term" value="F:metal ion binding"/>
    <property type="evidence" value="ECO:0007669"/>
    <property type="project" value="InterPro"/>
</dbReference>
<dbReference type="GO" id="GO:0004638">
    <property type="term" value="F:phosphoribosylaminoimidazole carboxylase activity"/>
    <property type="evidence" value="ECO:0007669"/>
    <property type="project" value="InterPro"/>
</dbReference>
<dbReference type="GO" id="GO:0006189">
    <property type="term" value="P:'de novo' IMP biosynthetic process"/>
    <property type="evidence" value="ECO:0007669"/>
    <property type="project" value="UniProtKB-UniRule"/>
</dbReference>
<dbReference type="FunFam" id="3.40.50.20:FF:000016">
    <property type="entry name" value="N5-carboxyaminoimidazole ribonucleotide synthase"/>
    <property type="match status" value="1"/>
</dbReference>
<dbReference type="Gene3D" id="3.40.50.20">
    <property type="match status" value="1"/>
</dbReference>
<dbReference type="Gene3D" id="3.30.1490.20">
    <property type="entry name" value="ATP-grasp fold, A domain"/>
    <property type="match status" value="1"/>
</dbReference>
<dbReference type="Gene3D" id="3.30.470.20">
    <property type="entry name" value="ATP-grasp fold, B domain"/>
    <property type="match status" value="1"/>
</dbReference>
<dbReference type="HAMAP" id="MF_01928">
    <property type="entry name" value="PurK"/>
    <property type="match status" value="1"/>
</dbReference>
<dbReference type="InterPro" id="IPR011761">
    <property type="entry name" value="ATP-grasp"/>
</dbReference>
<dbReference type="InterPro" id="IPR003135">
    <property type="entry name" value="ATP-grasp_carboxylate-amine"/>
</dbReference>
<dbReference type="InterPro" id="IPR013815">
    <property type="entry name" value="ATP_grasp_subdomain_1"/>
</dbReference>
<dbReference type="InterPro" id="IPR016185">
    <property type="entry name" value="PreATP-grasp_dom_sf"/>
</dbReference>
<dbReference type="InterPro" id="IPR005875">
    <property type="entry name" value="PurK"/>
</dbReference>
<dbReference type="InterPro" id="IPR040686">
    <property type="entry name" value="PurK_C"/>
</dbReference>
<dbReference type="InterPro" id="IPR054350">
    <property type="entry name" value="PurT/PurK_preATP-grasp"/>
</dbReference>
<dbReference type="InterPro" id="IPR011054">
    <property type="entry name" value="Rudment_hybrid_motif"/>
</dbReference>
<dbReference type="NCBIfam" id="NF004675">
    <property type="entry name" value="PRK06019.1-1"/>
    <property type="match status" value="1"/>
</dbReference>
<dbReference type="NCBIfam" id="NF004676">
    <property type="entry name" value="PRK06019.1-2"/>
    <property type="match status" value="1"/>
</dbReference>
<dbReference type="NCBIfam" id="NF004679">
    <property type="entry name" value="PRK06019.1-5"/>
    <property type="match status" value="1"/>
</dbReference>
<dbReference type="NCBIfam" id="TIGR01161">
    <property type="entry name" value="purK"/>
    <property type="match status" value="1"/>
</dbReference>
<dbReference type="PANTHER" id="PTHR11609:SF5">
    <property type="entry name" value="PHOSPHORIBOSYLAMINOIMIDAZOLE CARBOXYLASE"/>
    <property type="match status" value="1"/>
</dbReference>
<dbReference type="PANTHER" id="PTHR11609">
    <property type="entry name" value="PURINE BIOSYNTHESIS PROTEIN 6/7, PUR6/7"/>
    <property type="match status" value="1"/>
</dbReference>
<dbReference type="Pfam" id="PF02222">
    <property type="entry name" value="ATP-grasp"/>
    <property type="match status" value="1"/>
</dbReference>
<dbReference type="Pfam" id="PF17769">
    <property type="entry name" value="PurK_C"/>
    <property type="match status" value="1"/>
</dbReference>
<dbReference type="Pfam" id="PF22660">
    <property type="entry name" value="RS_preATP-grasp-like"/>
    <property type="match status" value="1"/>
</dbReference>
<dbReference type="SUPFAM" id="SSF56059">
    <property type="entry name" value="Glutathione synthetase ATP-binding domain-like"/>
    <property type="match status" value="1"/>
</dbReference>
<dbReference type="SUPFAM" id="SSF52440">
    <property type="entry name" value="PreATP-grasp domain"/>
    <property type="match status" value="1"/>
</dbReference>
<dbReference type="SUPFAM" id="SSF51246">
    <property type="entry name" value="Rudiment single hybrid motif"/>
    <property type="match status" value="1"/>
</dbReference>
<dbReference type="PROSITE" id="PS50975">
    <property type="entry name" value="ATP_GRASP"/>
    <property type="match status" value="1"/>
</dbReference>
<gene>
    <name evidence="1" type="primary">purK</name>
    <name type="ordered locus">SAR1039</name>
</gene>
<evidence type="ECO:0000255" key="1">
    <source>
        <dbReference type="HAMAP-Rule" id="MF_01928"/>
    </source>
</evidence>
<keyword id="KW-0067">ATP-binding</keyword>
<keyword id="KW-0436">Ligase</keyword>
<keyword id="KW-0547">Nucleotide-binding</keyword>
<keyword id="KW-0658">Purine biosynthesis</keyword>
<organism>
    <name type="scientific">Staphylococcus aureus (strain MRSA252)</name>
    <dbReference type="NCBI Taxonomy" id="282458"/>
    <lineage>
        <taxon>Bacteria</taxon>
        <taxon>Bacillati</taxon>
        <taxon>Bacillota</taxon>
        <taxon>Bacilli</taxon>
        <taxon>Bacillales</taxon>
        <taxon>Staphylococcaceae</taxon>
        <taxon>Staphylococcus</taxon>
    </lineage>
</organism>
<name>PURK_STAAR</name>
<comment type="function">
    <text evidence="1">Catalyzes the ATP-dependent conversion of 5-aminoimidazole ribonucleotide (AIR) and HCO(3)(-) to N5-carboxyaminoimidazole ribonucleotide (N5-CAIR).</text>
</comment>
<comment type="catalytic activity">
    <reaction evidence="1">
        <text>5-amino-1-(5-phospho-beta-D-ribosyl)imidazole + hydrogencarbonate + ATP = 5-carboxyamino-1-(5-phospho-D-ribosyl)imidazole + ADP + phosphate + 2 H(+)</text>
        <dbReference type="Rhea" id="RHEA:19317"/>
        <dbReference type="ChEBI" id="CHEBI:15378"/>
        <dbReference type="ChEBI" id="CHEBI:17544"/>
        <dbReference type="ChEBI" id="CHEBI:30616"/>
        <dbReference type="ChEBI" id="CHEBI:43474"/>
        <dbReference type="ChEBI" id="CHEBI:58730"/>
        <dbReference type="ChEBI" id="CHEBI:137981"/>
        <dbReference type="ChEBI" id="CHEBI:456216"/>
        <dbReference type="EC" id="6.3.4.18"/>
    </reaction>
</comment>
<comment type="pathway">
    <text evidence="1">Purine metabolism; IMP biosynthesis via de novo pathway; 5-amino-1-(5-phospho-D-ribosyl)imidazole-4-carboxylate from 5-amino-1-(5-phospho-D-ribosyl)imidazole (N5-CAIR route): step 1/2.</text>
</comment>
<comment type="subunit">
    <text evidence="1">Homodimer.</text>
</comment>
<comment type="similarity">
    <text evidence="1">Belongs to the PurK/PurT family.</text>
</comment>
<proteinExistence type="inferred from homology"/>
<sequence>MNFNKLKFGATIGIIGGGQLGKMMAQSAQKMGYKVAVLDPAEDCPCRYVAHEFIQAKYDDEKALNQLGQKCDVITYEFENISAQQLKLLCEKYNIPQGYQAIQLLQDRLTEKETLKSAGTKVVPFISVKESKDIDKAIETLGYPFIVKTRFGGYDGKGQVLINNEKDLQEGIKLIETSECVAEKYLNIKKEVSLTVTRGNNNQITYFPLQENEHRNQILFKTIVPARIDKIAEAKEQVNKIIQSIHFIGTFTVEFFIDSNNQLYVNEIAPRPHNSGHYSIEACDYSQFDTHILAVTGQSLPNSIELLKPAVMMNLLGKDLDLLENEFNEHPEWHLHIYGKSERKDSRKMGHMTVLTNDVNQTEQDMYAKFEGSN</sequence>
<protein>
    <recommendedName>
        <fullName evidence="1">N5-carboxyaminoimidazole ribonucleotide synthase</fullName>
        <shortName evidence="1">N5-CAIR synthase</shortName>
        <ecNumber evidence="1">6.3.4.18</ecNumber>
    </recommendedName>
    <alternativeName>
        <fullName evidence="1">5-(carboxyamino)imidazole ribonucleotide synthetase</fullName>
    </alternativeName>
</protein>
<reference key="1">
    <citation type="journal article" date="2004" name="Proc. Natl. Acad. Sci. U.S.A.">
        <title>Complete genomes of two clinical Staphylococcus aureus strains: evidence for the rapid evolution of virulence and drug resistance.</title>
        <authorList>
            <person name="Holden M.T.G."/>
            <person name="Feil E.J."/>
            <person name="Lindsay J.A."/>
            <person name="Peacock S.J."/>
            <person name="Day N.P.J."/>
            <person name="Enright M.C."/>
            <person name="Foster T.J."/>
            <person name="Moore C.E."/>
            <person name="Hurst L."/>
            <person name="Atkin R."/>
            <person name="Barron A."/>
            <person name="Bason N."/>
            <person name="Bentley S.D."/>
            <person name="Chillingworth C."/>
            <person name="Chillingworth T."/>
            <person name="Churcher C."/>
            <person name="Clark L."/>
            <person name="Corton C."/>
            <person name="Cronin A."/>
            <person name="Doggett J."/>
            <person name="Dowd L."/>
            <person name="Feltwell T."/>
            <person name="Hance Z."/>
            <person name="Harris B."/>
            <person name="Hauser H."/>
            <person name="Holroyd S."/>
            <person name="Jagels K."/>
            <person name="James K.D."/>
            <person name="Lennard N."/>
            <person name="Line A."/>
            <person name="Mayes R."/>
            <person name="Moule S."/>
            <person name="Mungall K."/>
            <person name="Ormond D."/>
            <person name="Quail M.A."/>
            <person name="Rabbinowitsch E."/>
            <person name="Rutherford K.M."/>
            <person name="Sanders M."/>
            <person name="Sharp S."/>
            <person name="Simmonds M."/>
            <person name="Stevens K."/>
            <person name="Whitehead S."/>
            <person name="Barrell B.G."/>
            <person name="Spratt B.G."/>
            <person name="Parkhill J."/>
        </authorList>
    </citation>
    <scope>NUCLEOTIDE SEQUENCE [LARGE SCALE GENOMIC DNA]</scope>
    <source>
        <strain>MRSA252</strain>
    </source>
</reference>